<keyword id="KW-1185">Reference proteome</keyword>
<keyword id="KW-0677">Repeat</keyword>
<feature type="chain" id="PRO_0000363570" description="Pentatricopeptide repeat-containing protein At5g56310">
    <location>
        <begin position="1"/>
        <end position="530"/>
    </location>
</feature>
<feature type="repeat" description="PPR 1">
    <location>
        <begin position="77"/>
        <end position="114"/>
    </location>
</feature>
<feature type="repeat" description="PPR 2">
    <location>
        <begin position="115"/>
        <end position="149"/>
    </location>
</feature>
<feature type="repeat" description="PPR 3">
    <location>
        <begin position="150"/>
        <end position="180"/>
    </location>
</feature>
<feature type="repeat" description="PPR 4">
    <location>
        <begin position="181"/>
        <end position="211"/>
    </location>
</feature>
<feature type="repeat" description="PPR 5">
    <location>
        <begin position="214"/>
        <end position="248"/>
    </location>
</feature>
<feature type="repeat" description="PPR 6">
    <location>
        <begin position="249"/>
        <end position="283"/>
    </location>
</feature>
<feature type="repeat" description="PPR 7">
    <location>
        <begin position="284"/>
        <end position="314"/>
    </location>
</feature>
<feature type="repeat" description="PPR 8">
    <location>
        <begin position="315"/>
        <end position="349"/>
    </location>
</feature>
<feature type="repeat" description="PPR 9">
    <location>
        <begin position="350"/>
        <end position="380"/>
    </location>
</feature>
<feature type="repeat" description="PPR 10">
    <location>
        <begin position="386"/>
        <end position="420"/>
    </location>
</feature>
<feature type="region of interest" description="Type E motif">
    <location>
        <begin position="421"/>
        <end position="496"/>
    </location>
</feature>
<feature type="region of interest" description="Type E(+) motif">
    <location>
        <begin position="497"/>
        <end position="527"/>
    </location>
</feature>
<feature type="sequence conflict" description="In Ref. 3; AK229016." evidence="1" ref="3">
    <original>M</original>
    <variation>T</variation>
    <location>
        <position position="1"/>
    </location>
</feature>
<evidence type="ECO:0000305" key="1"/>
<accession>Q9FMA1</accession>
<dbReference type="EMBL" id="AB009049">
    <property type="protein sequence ID" value="BAB11258.1"/>
    <property type="molecule type" value="Genomic_DNA"/>
</dbReference>
<dbReference type="EMBL" id="CP002688">
    <property type="protein sequence ID" value="AED96747.1"/>
    <property type="molecule type" value="Genomic_DNA"/>
</dbReference>
<dbReference type="EMBL" id="AK229016">
    <property type="status" value="NOT_ANNOTATED_CDS"/>
    <property type="molecule type" value="mRNA"/>
</dbReference>
<dbReference type="RefSeq" id="NP_200442.1">
    <property type="nucleotide sequence ID" value="NM_125014.5"/>
</dbReference>
<dbReference type="SMR" id="Q9FMA1"/>
<dbReference type="BioGRID" id="20974">
    <property type="interactions" value="1"/>
</dbReference>
<dbReference type="FunCoup" id="Q9FMA1">
    <property type="interactions" value="4"/>
</dbReference>
<dbReference type="PaxDb" id="3702-AT5G56310.1"/>
<dbReference type="EnsemblPlants" id="AT5G56310.1">
    <property type="protein sequence ID" value="AT5G56310.1"/>
    <property type="gene ID" value="AT5G56310"/>
</dbReference>
<dbReference type="GeneID" id="835730"/>
<dbReference type="Gramene" id="AT5G56310.1">
    <property type="protein sequence ID" value="AT5G56310.1"/>
    <property type="gene ID" value="AT5G56310"/>
</dbReference>
<dbReference type="KEGG" id="ath:AT5G56310"/>
<dbReference type="Araport" id="AT5G56310"/>
<dbReference type="TAIR" id="AT5G56310"/>
<dbReference type="eggNOG" id="KOG4197">
    <property type="taxonomic scope" value="Eukaryota"/>
</dbReference>
<dbReference type="HOGENOM" id="CLU_002706_0_6_1"/>
<dbReference type="InParanoid" id="Q9FMA1"/>
<dbReference type="OMA" id="HRSVITW"/>
<dbReference type="PhylomeDB" id="Q9FMA1"/>
<dbReference type="PRO" id="PR:Q9FMA1"/>
<dbReference type="Proteomes" id="UP000006548">
    <property type="component" value="Chromosome 5"/>
</dbReference>
<dbReference type="ExpressionAtlas" id="Q9FMA1">
    <property type="expression patterns" value="baseline and differential"/>
</dbReference>
<dbReference type="GO" id="GO:0003723">
    <property type="term" value="F:RNA binding"/>
    <property type="evidence" value="ECO:0007669"/>
    <property type="project" value="InterPro"/>
</dbReference>
<dbReference type="GO" id="GO:0009451">
    <property type="term" value="P:RNA modification"/>
    <property type="evidence" value="ECO:0007669"/>
    <property type="project" value="InterPro"/>
</dbReference>
<dbReference type="FunFam" id="1.25.40.10:FF:000242">
    <property type="entry name" value="Pentatricopeptide repeat-containing protein"/>
    <property type="match status" value="1"/>
</dbReference>
<dbReference type="FunFam" id="1.25.40.10:FF:001269">
    <property type="entry name" value="Pentatricopeptide repeat-containing protein At5g56310"/>
    <property type="match status" value="1"/>
</dbReference>
<dbReference type="Gene3D" id="1.25.40.10">
    <property type="entry name" value="Tetratricopeptide repeat domain"/>
    <property type="match status" value="3"/>
</dbReference>
<dbReference type="InterPro" id="IPR046848">
    <property type="entry name" value="E_motif"/>
</dbReference>
<dbReference type="InterPro" id="IPR002885">
    <property type="entry name" value="Pentatricopeptide_rpt"/>
</dbReference>
<dbReference type="InterPro" id="IPR046960">
    <property type="entry name" value="PPR_At4g14850-like_plant"/>
</dbReference>
<dbReference type="InterPro" id="IPR011990">
    <property type="entry name" value="TPR-like_helical_dom_sf"/>
</dbReference>
<dbReference type="NCBIfam" id="TIGR00756">
    <property type="entry name" value="PPR"/>
    <property type="match status" value="5"/>
</dbReference>
<dbReference type="PANTHER" id="PTHR47926:SF432">
    <property type="entry name" value="(WILD MALAYSIAN BANANA) HYPOTHETICAL PROTEIN"/>
    <property type="match status" value="1"/>
</dbReference>
<dbReference type="PANTHER" id="PTHR47926">
    <property type="entry name" value="PENTATRICOPEPTIDE REPEAT-CONTAINING PROTEIN"/>
    <property type="match status" value="1"/>
</dbReference>
<dbReference type="Pfam" id="PF20431">
    <property type="entry name" value="E_motif"/>
    <property type="match status" value="1"/>
</dbReference>
<dbReference type="Pfam" id="PF01535">
    <property type="entry name" value="PPR"/>
    <property type="match status" value="3"/>
</dbReference>
<dbReference type="Pfam" id="PF13041">
    <property type="entry name" value="PPR_2"/>
    <property type="match status" value="2"/>
</dbReference>
<dbReference type="SUPFAM" id="SSF48452">
    <property type="entry name" value="TPR-like"/>
    <property type="match status" value="1"/>
</dbReference>
<dbReference type="PROSITE" id="PS51375">
    <property type="entry name" value="PPR"/>
    <property type="match status" value="10"/>
</dbReference>
<sequence>MIQRINALSLSSGLNWFVTSLKIHGNNLKTLKQSHCYMIITGLNRDNLNVAKFIEACSNAGHLRYAYSVFTHQPCPNTYLHNTMIRALSLLDEPNAHSIAITVYRKLWALCAKPDTFTFPFVLKIAVRVSDVWFGRQIHGQVVVFGFDSSVHVVTGLIQMYFSCGGLGDARKMFDEMLVKDVNVWNALLAGYGKVGEMDEARSLLEMMPCWVRNEVSWTCVISGYAKSGRASEAIEVFQRMLMENVEPDEVTLLAVLSACADLGSLELGERICSYVDHRGMNRAVSLNNAVIDMYAKSGNITKALDVFECVNERNVVTWTTIIAGLATHGHGAEALAMFNRMVKAGVRPNDVTFIAILSACSHVGWVDLGKRLFNSMRSKYGIHPNIEHYGCMIDLLGRAGKLREADEVIKSMPFKANAAIWGSLLAASNVHHDLELGERALSELIKLEPNNSGNYMLLANLYSNLGRWDESRMMRNMMKGIGVKKMAGESSIEVENRVYKFISGDLTHPQVERIHEILQEMDLQIQSKV</sequence>
<reference key="1">
    <citation type="journal article" date="1998" name="DNA Res.">
        <title>Structural analysis of Arabidopsis thaliana chromosome 5. IV. Sequence features of the regions of 1,456,315 bp covered by nineteen physically assigned P1 and TAC clones.</title>
        <authorList>
            <person name="Sato S."/>
            <person name="Kaneko T."/>
            <person name="Kotani H."/>
            <person name="Nakamura Y."/>
            <person name="Asamizu E."/>
            <person name="Miyajima N."/>
            <person name="Tabata S."/>
        </authorList>
    </citation>
    <scope>NUCLEOTIDE SEQUENCE [LARGE SCALE GENOMIC DNA]</scope>
    <source>
        <strain>cv. Columbia</strain>
    </source>
</reference>
<reference key="2">
    <citation type="journal article" date="2017" name="Plant J.">
        <title>Araport11: a complete reannotation of the Arabidopsis thaliana reference genome.</title>
        <authorList>
            <person name="Cheng C.Y."/>
            <person name="Krishnakumar V."/>
            <person name="Chan A.P."/>
            <person name="Thibaud-Nissen F."/>
            <person name="Schobel S."/>
            <person name="Town C.D."/>
        </authorList>
    </citation>
    <scope>GENOME REANNOTATION</scope>
    <source>
        <strain>cv. Columbia</strain>
    </source>
</reference>
<reference key="3">
    <citation type="submission" date="2006-07" db="EMBL/GenBank/DDBJ databases">
        <title>Large-scale analysis of RIKEN Arabidopsis full-length (RAFL) cDNAs.</title>
        <authorList>
            <person name="Totoki Y."/>
            <person name="Seki M."/>
            <person name="Ishida J."/>
            <person name="Nakajima M."/>
            <person name="Enju A."/>
            <person name="Kamiya A."/>
            <person name="Narusaka M."/>
            <person name="Shin-i T."/>
            <person name="Nakagawa M."/>
            <person name="Sakamoto N."/>
            <person name="Oishi K."/>
            <person name="Kohara Y."/>
            <person name="Kobayashi M."/>
            <person name="Toyoda A."/>
            <person name="Sakaki Y."/>
            <person name="Sakurai T."/>
            <person name="Iida K."/>
            <person name="Akiyama K."/>
            <person name="Satou M."/>
            <person name="Toyoda T."/>
            <person name="Konagaya A."/>
            <person name="Carninci P."/>
            <person name="Kawai J."/>
            <person name="Hayashizaki Y."/>
            <person name="Shinozaki K."/>
        </authorList>
    </citation>
    <scope>NUCLEOTIDE SEQUENCE [LARGE SCALE MRNA]</scope>
    <source>
        <strain>cv. Columbia</strain>
    </source>
</reference>
<reference key="4">
    <citation type="journal article" date="2000" name="Plant Mol. Biol.">
        <title>In Arabidopsis thaliana, 1% of the genome codes for a novel protein family unique to plants.</title>
        <authorList>
            <person name="Aubourg S."/>
            <person name="Boudet N."/>
            <person name="Kreis M."/>
            <person name="Lecharny A."/>
        </authorList>
    </citation>
    <scope>GENE FAMILY</scope>
</reference>
<reference key="5">
    <citation type="journal article" date="2004" name="Plant Cell">
        <title>Genome-wide analysis of Arabidopsis pentatricopeptide repeat proteins reveals their essential role in organelle biogenesis.</title>
        <authorList>
            <person name="Lurin C."/>
            <person name="Andres C."/>
            <person name="Aubourg S."/>
            <person name="Bellaoui M."/>
            <person name="Bitton F."/>
            <person name="Bruyere C."/>
            <person name="Caboche M."/>
            <person name="Debast C."/>
            <person name="Gualberto J."/>
            <person name="Hoffmann B."/>
            <person name="Lecharny A."/>
            <person name="Le Ret M."/>
            <person name="Martin-Magniette M.-L."/>
            <person name="Mireau H."/>
            <person name="Peeters N."/>
            <person name="Renou J.-P."/>
            <person name="Szurek B."/>
            <person name="Taconnat L."/>
            <person name="Small I."/>
        </authorList>
    </citation>
    <scope>GENE FAMILY</scope>
</reference>
<proteinExistence type="evidence at transcript level"/>
<name>PP433_ARATH</name>
<gene>
    <name type="primary">PCMP-E13</name>
    <name type="ordered locus">At5g56310</name>
    <name type="ORF">MCD7.3</name>
</gene>
<comment type="similarity">
    <text evidence="1">Belongs to the PPR family. PCMP-E subfamily.</text>
</comment>
<comment type="online information" name="Pentatricopeptide repeat proteins">
    <link uri="https://ppr.plantenergy.uwa.edu.au"/>
</comment>
<organism>
    <name type="scientific">Arabidopsis thaliana</name>
    <name type="common">Mouse-ear cress</name>
    <dbReference type="NCBI Taxonomy" id="3702"/>
    <lineage>
        <taxon>Eukaryota</taxon>
        <taxon>Viridiplantae</taxon>
        <taxon>Streptophyta</taxon>
        <taxon>Embryophyta</taxon>
        <taxon>Tracheophyta</taxon>
        <taxon>Spermatophyta</taxon>
        <taxon>Magnoliopsida</taxon>
        <taxon>eudicotyledons</taxon>
        <taxon>Gunneridae</taxon>
        <taxon>Pentapetalae</taxon>
        <taxon>rosids</taxon>
        <taxon>malvids</taxon>
        <taxon>Brassicales</taxon>
        <taxon>Brassicaceae</taxon>
        <taxon>Camelineae</taxon>
        <taxon>Arabidopsis</taxon>
    </lineage>
</organism>
<protein>
    <recommendedName>
        <fullName>Pentatricopeptide repeat-containing protein At5g56310</fullName>
    </recommendedName>
</protein>